<evidence type="ECO:0000255" key="1">
    <source>
        <dbReference type="HAMAP-Rule" id="MF_01006"/>
    </source>
</evidence>
<keyword id="KW-0046">Antibiotic resistance</keyword>
<keyword id="KW-1003">Cell membrane</keyword>
<keyword id="KW-0133">Cell shape</keyword>
<keyword id="KW-0961">Cell wall biogenesis/degradation</keyword>
<keyword id="KW-0378">Hydrolase</keyword>
<keyword id="KW-0472">Membrane</keyword>
<keyword id="KW-0573">Peptidoglycan synthesis</keyword>
<keyword id="KW-0812">Transmembrane</keyword>
<keyword id="KW-1133">Transmembrane helix</keyword>
<gene>
    <name evidence="1" type="primary">uppP4</name>
    <name type="synonym">bacA4</name>
    <name type="ordered locus">BCE33L2444</name>
</gene>
<accession>Q63AN4</accession>
<dbReference type="EC" id="3.6.1.27" evidence="1"/>
<dbReference type="EMBL" id="CP000001">
    <property type="protein sequence ID" value="AAU17815.1"/>
    <property type="molecule type" value="Genomic_DNA"/>
</dbReference>
<dbReference type="RefSeq" id="WP_001104269.1">
    <property type="nucleotide sequence ID" value="NZ_CP009968.1"/>
</dbReference>
<dbReference type="SMR" id="Q63AN4"/>
<dbReference type="KEGG" id="bcz:BCE33L2444"/>
<dbReference type="PATRIC" id="fig|288681.22.peg.3038"/>
<dbReference type="Proteomes" id="UP000002612">
    <property type="component" value="Chromosome"/>
</dbReference>
<dbReference type="GO" id="GO:0005886">
    <property type="term" value="C:plasma membrane"/>
    <property type="evidence" value="ECO:0007669"/>
    <property type="project" value="UniProtKB-SubCell"/>
</dbReference>
<dbReference type="GO" id="GO:0050380">
    <property type="term" value="F:undecaprenyl-diphosphatase activity"/>
    <property type="evidence" value="ECO:0007669"/>
    <property type="project" value="UniProtKB-UniRule"/>
</dbReference>
<dbReference type="GO" id="GO:0071555">
    <property type="term" value="P:cell wall organization"/>
    <property type="evidence" value="ECO:0007669"/>
    <property type="project" value="UniProtKB-KW"/>
</dbReference>
<dbReference type="GO" id="GO:0009252">
    <property type="term" value="P:peptidoglycan biosynthetic process"/>
    <property type="evidence" value="ECO:0007669"/>
    <property type="project" value="UniProtKB-KW"/>
</dbReference>
<dbReference type="GO" id="GO:0008360">
    <property type="term" value="P:regulation of cell shape"/>
    <property type="evidence" value="ECO:0007669"/>
    <property type="project" value="UniProtKB-KW"/>
</dbReference>
<dbReference type="GO" id="GO:0046677">
    <property type="term" value="P:response to antibiotic"/>
    <property type="evidence" value="ECO:0007669"/>
    <property type="project" value="UniProtKB-UniRule"/>
</dbReference>
<dbReference type="HAMAP" id="MF_01006">
    <property type="entry name" value="Undec_diphosphatase"/>
    <property type="match status" value="1"/>
</dbReference>
<dbReference type="InterPro" id="IPR003824">
    <property type="entry name" value="UppP"/>
</dbReference>
<dbReference type="PANTHER" id="PTHR30622">
    <property type="entry name" value="UNDECAPRENYL-DIPHOSPHATASE"/>
    <property type="match status" value="1"/>
</dbReference>
<dbReference type="PANTHER" id="PTHR30622:SF4">
    <property type="entry name" value="UNDECAPRENYL-DIPHOSPHATASE"/>
    <property type="match status" value="1"/>
</dbReference>
<dbReference type="Pfam" id="PF02673">
    <property type="entry name" value="BacA"/>
    <property type="match status" value="1"/>
</dbReference>
<reference key="1">
    <citation type="journal article" date="2006" name="J. Bacteriol.">
        <title>Pathogenomic sequence analysis of Bacillus cereus and Bacillus thuringiensis isolates closely related to Bacillus anthracis.</title>
        <authorList>
            <person name="Han C.S."/>
            <person name="Xie G."/>
            <person name="Challacombe J.F."/>
            <person name="Altherr M.R."/>
            <person name="Bhotika S.S."/>
            <person name="Bruce D."/>
            <person name="Campbell C.S."/>
            <person name="Campbell M.L."/>
            <person name="Chen J."/>
            <person name="Chertkov O."/>
            <person name="Cleland C."/>
            <person name="Dimitrijevic M."/>
            <person name="Doggett N.A."/>
            <person name="Fawcett J.J."/>
            <person name="Glavina T."/>
            <person name="Goodwin L.A."/>
            <person name="Hill K.K."/>
            <person name="Hitchcock P."/>
            <person name="Jackson P.J."/>
            <person name="Keim P."/>
            <person name="Kewalramani A.R."/>
            <person name="Longmire J."/>
            <person name="Lucas S."/>
            <person name="Malfatti S."/>
            <person name="McMurry K."/>
            <person name="Meincke L.J."/>
            <person name="Misra M."/>
            <person name="Moseman B.L."/>
            <person name="Mundt M."/>
            <person name="Munk A.C."/>
            <person name="Okinaka R.T."/>
            <person name="Parson-Quintana B."/>
            <person name="Reilly L.P."/>
            <person name="Richardson P."/>
            <person name="Robinson D.L."/>
            <person name="Rubin E."/>
            <person name="Saunders E."/>
            <person name="Tapia R."/>
            <person name="Tesmer J.G."/>
            <person name="Thayer N."/>
            <person name="Thompson L.S."/>
            <person name="Tice H."/>
            <person name="Ticknor L.O."/>
            <person name="Wills P.L."/>
            <person name="Brettin T.S."/>
            <person name="Gilna P."/>
        </authorList>
    </citation>
    <scope>NUCLEOTIDE SEQUENCE [LARGE SCALE GENOMIC DNA]</scope>
    <source>
        <strain>ZK / E33L</strain>
    </source>
</reference>
<proteinExistence type="inferred from homology"/>
<name>UPPP4_BACCZ</name>
<feature type="chain" id="PRO_0000151097" description="Undecaprenyl-diphosphatase 4">
    <location>
        <begin position="1"/>
        <end position="259"/>
    </location>
</feature>
<feature type="transmembrane region" description="Helical" evidence="1">
    <location>
        <begin position="1"/>
        <end position="21"/>
    </location>
</feature>
<feature type="transmembrane region" description="Helical" evidence="1">
    <location>
        <begin position="39"/>
        <end position="59"/>
    </location>
</feature>
<feature type="transmembrane region" description="Helical" evidence="1">
    <location>
        <begin position="71"/>
        <end position="91"/>
    </location>
</feature>
<feature type="transmembrane region" description="Helical" evidence="1">
    <location>
        <begin position="99"/>
        <end position="119"/>
    </location>
</feature>
<feature type="transmembrane region" description="Helical" evidence="1">
    <location>
        <begin position="133"/>
        <end position="153"/>
    </location>
</feature>
<feature type="transmembrane region" description="Helical" evidence="1">
    <location>
        <begin position="174"/>
        <end position="194"/>
    </location>
</feature>
<feature type="transmembrane region" description="Helical" evidence="1">
    <location>
        <begin position="208"/>
        <end position="228"/>
    </location>
</feature>
<feature type="transmembrane region" description="Helical" evidence="1">
    <location>
        <begin position="239"/>
        <end position="259"/>
    </location>
</feature>
<comment type="function">
    <text evidence="1">Catalyzes the dephosphorylation of undecaprenyl diphosphate (UPP). Confers resistance to bacitracin.</text>
</comment>
<comment type="catalytic activity">
    <reaction evidence="1">
        <text>di-trans,octa-cis-undecaprenyl diphosphate + H2O = di-trans,octa-cis-undecaprenyl phosphate + phosphate + H(+)</text>
        <dbReference type="Rhea" id="RHEA:28094"/>
        <dbReference type="ChEBI" id="CHEBI:15377"/>
        <dbReference type="ChEBI" id="CHEBI:15378"/>
        <dbReference type="ChEBI" id="CHEBI:43474"/>
        <dbReference type="ChEBI" id="CHEBI:58405"/>
        <dbReference type="ChEBI" id="CHEBI:60392"/>
        <dbReference type="EC" id="3.6.1.27"/>
    </reaction>
</comment>
<comment type="subcellular location">
    <subcellularLocation>
        <location evidence="1">Cell membrane</location>
        <topology evidence="1">Multi-pass membrane protein</topology>
    </subcellularLocation>
</comment>
<comment type="miscellaneous">
    <text>Bacitracin is thought to be involved in the inhibition of peptidoglycan synthesis by sequestering undecaprenyl diphosphate, thereby reducing the pool of lipid carrier available.</text>
</comment>
<comment type="similarity">
    <text evidence="1">Belongs to the UppP family.</text>
</comment>
<sequence length="259" mass="29177">MNWLEAFILGIIQGLTEFLPISSTGHLYLGRHLFQLDEAGLFLDTMLHIGTLLAVFIYYKKEFIYLIKNPFSKLMLLLIVGTIPAVVIGLLFKDFFEDISKTGITIGWEFLVTGFFLYMADKQKNGRKKMDDITYKDAFIIGSFQAAAIFPAISRSGMTIVAALWRKLDRETAAYFSFLLSTPAIVGAIILQFVDVFQGKAESISSTSLIVGTLSAAFFGYIAVSWMIQYLKRHSLKVFAYYVWGLGILILTLQFTDVF</sequence>
<protein>
    <recommendedName>
        <fullName evidence="1">Undecaprenyl-diphosphatase 4</fullName>
        <ecNumber evidence="1">3.6.1.27</ecNumber>
    </recommendedName>
    <alternativeName>
        <fullName evidence="1">Bacitracin resistance protein 4</fullName>
    </alternativeName>
    <alternativeName>
        <fullName evidence="1">Undecaprenyl pyrophosphate phosphatase 4</fullName>
    </alternativeName>
</protein>
<organism>
    <name type="scientific">Bacillus cereus (strain ZK / E33L)</name>
    <dbReference type="NCBI Taxonomy" id="288681"/>
    <lineage>
        <taxon>Bacteria</taxon>
        <taxon>Bacillati</taxon>
        <taxon>Bacillota</taxon>
        <taxon>Bacilli</taxon>
        <taxon>Bacillales</taxon>
        <taxon>Bacillaceae</taxon>
        <taxon>Bacillus</taxon>
        <taxon>Bacillus cereus group</taxon>
    </lineage>
</organism>